<name>SEP10_RAT</name>
<reference key="1">
    <citation type="journal article" date="2004" name="Genome Res.">
        <title>The status, quality, and expansion of the NIH full-length cDNA project: the Mammalian Gene Collection (MGC).</title>
        <authorList>
            <consortium name="The MGC Project Team"/>
        </authorList>
    </citation>
    <scope>NUCLEOTIDE SEQUENCE [LARGE SCALE MRNA]</scope>
    <source>
        <tissue>Testis</tissue>
    </source>
</reference>
<reference key="2">
    <citation type="submission" date="2006-09" db="UniProtKB">
        <authorList>
            <person name="Lubec G."/>
            <person name="Chen W.-Q."/>
        </authorList>
    </citation>
    <scope>PROTEIN SEQUENCE OF 37-56</scope>
    <scope>IDENTIFICATION BY MASS SPECTROMETRY</scope>
</reference>
<gene>
    <name evidence="3" type="primary">Septin10</name>
    <name evidence="6" type="synonym">Sept10</name>
</gene>
<accession>Q5PQK1</accession>
<evidence type="ECO:0000250" key="1"/>
<evidence type="ECO:0000250" key="2">
    <source>
        <dbReference type="UniProtKB" id="Q8C650"/>
    </source>
</evidence>
<evidence type="ECO:0000250" key="3">
    <source>
        <dbReference type="UniProtKB" id="Q9P0V9"/>
    </source>
</evidence>
<evidence type="ECO:0000255" key="4">
    <source>
        <dbReference type="PROSITE-ProRule" id="PRU01056"/>
    </source>
</evidence>
<evidence type="ECO:0000305" key="5"/>
<evidence type="ECO:0000312" key="6">
    <source>
        <dbReference type="RGD" id="1359307"/>
    </source>
</evidence>
<sequence length="456" mass="53039">MASCDEVRQLKKEHTRSLTMCGHVGFESLPDQLVDRSIEQGFCFNILCVGETGIGKSTLINTLFNTNFEELESSHFCPCVRLRAQTYELQESNVRLKLTIVNTVGFGDQINKEESYQPIVDYIDNQFEAYLQEELKIKRALFNYHDSRIHVCLYFIAPTGHSLRTLDLLTMKSLDNKVNIIPLIAKADTISKSELQKFKMKLMSELVINGVQIYQFPTDDDTTAKINGAMNGHLPFAVVGSMDEIKVGNKMVKARQYPWGIVQVENENHCDFVKLREMLICTNMEDLREQTHMRHYELYRRCKLQEMGFIDIGPENKPLSLQETYEAKRHEFCGERQRKEEQMKQMFVQRVKEKEAILKEAERELQAKFEHLKRIHQEERMKLEEKRRMLEEESVAFAKKKATCELFPHQSFLASGSSIRRDKDRKKTDGASAFCDCITAQENVRLCISSQRKEMD</sequence>
<protein>
    <recommendedName>
        <fullName>Septin-10</fullName>
    </recommendedName>
</protein>
<organism>
    <name type="scientific">Rattus norvegicus</name>
    <name type="common">Rat</name>
    <dbReference type="NCBI Taxonomy" id="10116"/>
    <lineage>
        <taxon>Eukaryota</taxon>
        <taxon>Metazoa</taxon>
        <taxon>Chordata</taxon>
        <taxon>Craniata</taxon>
        <taxon>Vertebrata</taxon>
        <taxon>Euteleostomi</taxon>
        <taxon>Mammalia</taxon>
        <taxon>Eutheria</taxon>
        <taxon>Euarchontoglires</taxon>
        <taxon>Glires</taxon>
        <taxon>Rodentia</taxon>
        <taxon>Myomorpha</taxon>
        <taxon>Muroidea</taxon>
        <taxon>Muridae</taxon>
        <taxon>Murinae</taxon>
        <taxon>Rattus</taxon>
    </lineage>
</organism>
<feature type="chain" id="PRO_0000173541" description="Septin-10">
    <location>
        <begin position="1"/>
        <end position="456"/>
    </location>
</feature>
<feature type="domain" description="Septin-type G" evidence="4">
    <location>
        <begin position="40"/>
        <end position="306"/>
    </location>
</feature>
<feature type="region of interest" description="G1 motif" evidence="4">
    <location>
        <begin position="50"/>
        <end position="57"/>
    </location>
</feature>
<feature type="region of interest" description="G3 motif" evidence="4">
    <location>
        <begin position="102"/>
        <end position="105"/>
    </location>
</feature>
<feature type="region of interest" description="G4 motif" evidence="4">
    <location>
        <begin position="185"/>
        <end position="188"/>
    </location>
</feature>
<feature type="binding site" evidence="1">
    <location>
        <begin position="50"/>
        <end position="57"/>
    </location>
    <ligand>
        <name>GTP</name>
        <dbReference type="ChEBI" id="CHEBI:37565"/>
    </ligand>
</feature>
<feature type="binding site" evidence="1">
    <location>
        <position position="105"/>
    </location>
    <ligand>
        <name>GTP</name>
        <dbReference type="ChEBI" id="CHEBI:37565"/>
    </ligand>
</feature>
<feature type="binding site" evidence="1">
    <location>
        <begin position="186"/>
        <end position="194"/>
    </location>
    <ligand>
        <name>GTP</name>
        <dbReference type="ChEBI" id="CHEBI:37565"/>
    </ligand>
</feature>
<feature type="binding site" evidence="1">
    <location>
        <position position="240"/>
    </location>
    <ligand>
        <name>GTP</name>
        <dbReference type="ChEBI" id="CHEBI:37565"/>
    </ligand>
</feature>
<feature type="binding site" evidence="1">
    <location>
        <position position="255"/>
    </location>
    <ligand>
        <name>GTP</name>
        <dbReference type="ChEBI" id="CHEBI:37565"/>
    </ligand>
</feature>
<feature type="modified residue" description="Phosphoserine" evidence="2">
    <location>
        <position position="418"/>
    </location>
</feature>
<feature type="sequence conflict" description="In Ref. 2; AA sequence." evidence="5" ref="2">
    <original>IE</original>
    <variation>TS</variation>
    <location>
        <begin position="38"/>
        <end position="39"/>
    </location>
</feature>
<keyword id="KW-0131">Cell cycle</keyword>
<keyword id="KW-0132">Cell division</keyword>
<keyword id="KW-0966">Cell projection</keyword>
<keyword id="KW-0969">Cilium</keyword>
<keyword id="KW-0963">Cytoplasm</keyword>
<keyword id="KW-0206">Cytoskeleton</keyword>
<keyword id="KW-0903">Direct protein sequencing</keyword>
<keyword id="KW-0282">Flagellum</keyword>
<keyword id="KW-0342">GTP-binding</keyword>
<keyword id="KW-0547">Nucleotide-binding</keyword>
<keyword id="KW-0597">Phosphoprotein</keyword>
<keyword id="KW-1185">Reference proteome</keyword>
<comment type="function">
    <text evidence="1 5">Filament-forming cytoskeletal GTPase (By similarity). May play a role in cytokinesis (Potential).</text>
</comment>
<comment type="subunit">
    <text evidence="2">Septins polymerize into heterooligomeric protein complexes that form filaments, and can associate with cellular membranes, actin filaments and microtubules. GTPase activity is required for filament formation (By similarity). Interacts with ADGB (By similarity).</text>
</comment>
<comment type="subcellular location">
    <subcellularLocation>
        <location evidence="3">Cytoplasm</location>
    </subcellularLocation>
    <subcellularLocation>
        <location evidence="1">Cytoplasm</location>
        <location evidence="1">Cytoskeleton</location>
    </subcellularLocation>
    <subcellularLocation>
        <location evidence="2">Cell projection</location>
        <location evidence="2">Cilium</location>
        <location evidence="2">Flagellum</location>
    </subcellularLocation>
    <text evidence="2">Detected in the annulus of the sperm flagellum and in the neck region in spermatids and mature sperm.</text>
</comment>
<comment type="PTM">
    <text evidence="2">Proteolytically cleaved in vitro in a calmodulin-dependent manner.</text>
</comment>
<comment type="similarity">
    <text evidence="4">Belongs to the TRAFAC class TrmE-Era-EngA-EngB-Septin-like GTPase superfamily. Septin GTPase family.</text>
</comment>
<dbReference type="EMBL" id="BC087157">
    <property type="protein sequence ID" value="AAH87157.1"/>
    <property type="molecule type" value="mRNA"/>
</dbReference>
<dbReference type="RefSeq" id="NP_001014055.1">
    <property type="nucleotide sequence ID" value="NM_001014033.1"/>
</dbReference>
<dbReference type="SMR" id="Q5PQK1"/>
<dbReference type="FunCoup" id="Q5PQK1">
    <property type="interactions" value="1037"/>
</dbReference>
<dbReference type="STRING" id="10116.ENSRNOP00000064265"/>
<dbReference type="PhosphoSitePlus" id="Q5PQK1"/>
<dbReference type="jPOST" id="Q5PQK1"/>
<dbReference type="PaxDb" id="10116-ENSRNOP00000064265"/>
<dbReference type="Ensembl" id="ENSRNOT00000071663.3">
    <property type="protein sequence ID" value="ENSRNOP00000064265.3"/>
    <property type="gene ID" value="ENSRNOG00000049507.3"/>
</dbReference>
<dbReference type="GeneID" id="309891"/>
<dbReference type="KEGG" id="rno:309891"/>
<dbReference type="AGR" id="RGD:1359307"/>
<dbReference type="CTD" id="151011"/>
<dbReference type="RGD" id="1359307">
    <property type="gene designation" value="Septin10"/>
</dbReference>
<dbReference type="eggNOG" id="KOG3859">
    <property type="taxonomic scope" value="Eukaryota"/>
</dbReference>
<dbReference type="GeneTree" id="ENSGT00940000155238"/>
<dbReference type="HOGENOM" id="CLU_017718_8_1_1"/>
<dbReference type="InParanoid" id="Q5PQK1"/>
<dbReference type="OMA" id="FKDMGPE"/>
<dbReference type="OrthoDB" id="416553at2759"/>
<dbReference type="PhylomeDB" id="Q5PQK1"/>
<dbReference type="PRO" id="PR:Q5PQK1"/>
<dbReference type="Proteomes" id="UP000002494">
    <property type="component" value="Chromosome 20"/>
</dbReference>
<dbReference type="GO" id="GO:0032153">
    <property type="term" value="C:cell division site"/>
    <property type="evidence" value="ECO:0000318"/>
    <property type="project" value="GO_Central"/>
</dbReference>
<dbReference type="GO" id="GO:0015630">
    <property type="term" value="C:microtubule cytoskeleton"/>
    <property type="evidence" value="ECO:0000318"/>
    <property type="project" value="GO_Central"/>
</dbReference>
<dbReference type="GO" id="GO:0031105">
    <property type="term" value="C:septin complex"/>
    <property type="evidence" value="ECO:0000318"/>
    <property type="project" value="GO_Central"/>
</dbReference>
<dbReference type="GO" id="GO:0005940">
    <property type="term" value="C:septin ring"/>
    <property type="evidence" value="ECO:0000318"/>
    <property type="project" value="GO_Central"/>
</dbReference>
<dbReference type="GO" id="GO:0097227">
    <property type="term" value="C:sperm annulus"/>
    <property type="evidence" value="ECO:0000266"/>
    <property type="project" value="RGD"/>
</dbReference>
<dbReference type="GO" id="GO:0036126">
    <property type="term" value="C:sperm flagellum"/>
    <property type="evidence" value="ECO:0000266"/>
    <property type="project" value="RGD"/>
</dbReference>
<dbReference type="GO" id="GO:0005525">
    <property type="term" value="F:GTP binding"/>
    <property type="evidence" value="ECO:0007669"/>
    <property type="project" value="UniProtKB-KW"/>
</dbReference>
<dbReference type="GO" id="GO:0003924">
    <property type="term" value="F:GTPase activity"/>
    <property type="evidence" value="ECO:0000318"/>
    <property type="project" value="GO_Central"/>
</dbReference>
<dbReference type="GO" id="GO:0060090">
    <property type="term" value="F:molecular adaptor activity"/>
    <property type="evidence" value="ECO:0000318"/>
    <property type="project" value="GO_Central"/>
</dbReference>
<dbReference type="GO" id="GO:0061640">
    <property type="term" value="P:cytoskeleton-dependent cytokinesis"/>
    <property type="evidence" value="ECO:0000318"/>
    <property type="project" value="GO_Central"/>
</dbReference>
<dbReference type="GO" id="GO:0008104">
    <property type="term" value="P:protein localization"/>
    <property type="evidence" value="ECO:0000318"/>
    <property type="project" value="GO_Central"/>
</dbReference>
<dbReference type="CDD" id="cd01850">
    <property type="entry name" value="CDC_Septin"/>
    <property type="match status" value="1"/>
</dbReference>
<dbReference type="FunFam" id="3.40.50.300:FF:000036">
    <property type="entry name" value="septin-6 isoform X2"/>
    <property type="match status" value="1"/>
</dbReference>
<dbReference type="Gene3D" id="3.40.50.300">
    <property type="entry name" value="P-loop containing nucleotide triphosphate hydrolases"/>
    <property type="match status" value="1"/>
</dbReference>
<dbReference type="InterPro" id="IPR030379">
    <property type="entry name" value="G_SEPTIN_dom"/>
</dbReference>
<dbReference type="InterPro" id="IPR027417">
    <property type="entry name" value="P-loop_NTPase"/>
</dbReference>
<dbReference type="InterPro" id="IPR016491">
    <property type="entry name" value="Septin"/>
</dbReference>
<dbReference type="PANTHER" id="PTHR18884">
    <property type="entry name" value="SEPTIN"/>
    <property type="match status" value="1"/>
</dbReference>
<dbReference type="Pfam" id="PF00735">
    <property type="entry name" value="Septin"/>
    <property type="match status" value="1"/>
</dbReference>
<dbReference type="PIRSF" id="PIRSF006698">
    <property type="entry name" value="Septin"/>
    <property type="match status" value="1"/>
</dbReference>
<dbReference type="SUPFAM" id="SSF52540">
    <property type="entry name" value="P-loop containing nucleoside triphosphate hydrolases"/>
    <property type="match status" value="1"/>
</dbReference>
<dbReference type="PROSITE" id="PS51719">
    <property type="entry name" value="G_SEPTIN"/>
    <property type="match status" value="1"/>
</dbReference>
<proteinExistence type="evidence at protein level"/>